<comment type="function">
    <text evidence="1">Represses a number of genes involved in the response to DNA damage (SOS response), including recA and lexA. In the presence of single-stranded DNA, RecA interacts with LexA causing an autocatalytic cleavage which disrupts the DNA-binding part of LexA, leading to derepression of the SOS regulon and eventually DNA repair.</text>
</comment>
<comment type="catalytic activity">
    <reaction evidence="1">
        <text>Hydrolysis of Ala-|-Gly bond in repressor LexA.</text>
        <dbReference type="EC" id="3.4.21.88"/>
    </reaction>
</comment>
<comment type="subunit">
    <text evidence="1">Homodimer.</text>
</comment>
<comment type="similarity">
    <text evidence="1">Belongs to the peptidase S24 family.</text>
</comment>
<keyword id="KW-0068">Autocatalytic cleavage</keyword>
<keyword id="KW-0227">DNA damage</keyword>
<keyword id="KW-0234">DNA repair</keyword>
<keyword id="KW-0235">DNA replication</keyword>
<keyword id="KW-0238">DNA-binding</keyword>
<keyword id="KW-0378">Hydrolase</keyword>
<keyword id="KW-1185">Reference proteome</keyword>
<keyword id="KW-0678">Repressor</keyword>
<keyword id="KW-0742">SOS response</keyword>
<keyword id="KW-0804">Transcription</keyword>
<keyword id="KW-0805">Transcription regulation</keyword>
<reference key="1">
    <citation type="submission" date="2007-03" db="EMBL/GenBank/DDBJ databases">
        <title>Complete sequence of Desulfotomaculum reducens MI-1.</title>
        <authorList>
            <consortium name="US DOE Joint Genome Institute"/>
            <person name="Copeland A."/>
            <person name="Lucas S."/>
            <person name="Lapidus A."/>
            <person name="Barry K."/>
            <person name="Detter J.C."/>
            <person name="Glavina del Rio T."/>
            <person name="Hammon N."/>
            <person name="Israni S."/>
            <person name="Dalin E."/>
            <person name="Tice H."/>
            <person name="Pitluck S."/>
            <person name="Sims D."/>
            <person name="Brettin T."/>
            <person name="Bruce D."/>
            <person name="Han C."/>
            <person name="Tapia R."/>
            <person name="Schmutz J."/>
            <person name="Larimer F."/>
            <person name="Land M."/>
            <person name="Hauser L."/>
            <person name="Kyrpides N."/>
            <person name="Kim E."/>
            <person name="Tebo B.M."/>
            <person name="Richardson P."/>
        </authorList>
    </citation>
    <scope>NUCLEOTIDE SEQUENCE [LARGE SCALE GENOMIC DNA]</scope>
    <source>
        <strain>ATCC BAA-1160 / DSM 100696 / MI-1</strain>
    </source>
</reference>
<gene>
    <name evidence="1" type="primary">lexA</name>
    <name type="ordered locus">Dred_1873</name>
</gene>
<evidence type="ECO:0000255" key="1">
    <source>
        <dbReference type="HAMAP-Rule" id="MF_00015"/>
    </source>
</evidence>
<sequence length="214" mass="23884">MLNAREEEVLNVIIENVKLKGYPPSVREIGEAVGLSSSSTVHSYLKRLEQKGYLRRDPTKPRAIEVIMSELSKNPSSHPLTSELSRYSDEELISIPLLGEVAAGVPLLAVENYDEKVTLPRSFTGYGEFFMLSVRGDSMIEAGILPGDLVLVRRQESVSNGDIAVALLEDEATVKRFYKEKNRIRLQPENSLLSPIYVQEVKILGKVVGLMRKI</sequence>
<accession>A4J5P4</accession>
<name>LEXA_DESRM</name>
<organism>
    <name type="scientific">Desulforamulus reducens (strain ATCC BAA-1160 / DSM 100696 / MI-1)</name>
    <name type="common">Desulfotomaculum reducens</name>
    <dbReference type="NCBI Taxonomy" id="349161"/>
    <lineage>
        <taxon>Bacteria</taxon>
        <taxon>Bacillati</taxon>
        <taxon>Bacillota</taxon>
        <taxon>Clostridia</taxon>
        <taxon>Eubacteriales</taxon>
        <taxon>Peptococcaceae</taxon>
        <taxon>Desulforamulus</taxon>
    </lineage>
</organism>
<proteinExistence type="inferred from homology"/>
<dbReference type="EC" id="3.4.21.88" evidence="1"/>
<dbReference type="EMBL" id="CP000612">
    <property type="protein sequence ID" value="ABO50397.1"/>
    <property type="molecule type" value="Genomic_DNA"/>
</dbReference>
<dbReference type="RefSeq" id="WP_011878209.1">
    <property type="nucleotide sequence ID" value="NC_009253.1"/>
</dbReference>
<dbReference type="SMR" id="A4J5P4"/>
<dbReference type="STRING" id="349161.Dred_1873"/>
<dbReference type="MEROPS" id="S24.001"/>
<dbReference type="KEGG" id="drm:Dred_1873"/>
<dbReference type="eggNOG" id="COG1974">
    <property type="taxonomic scope" value="Bacteria"/>
</dbReference>
<dbReference type="HOGENOM" id="CLU_066192_45_1_9"/>
<dbReference type="OrthoDB" id="9802364at2"/>
<dbReference type="Proteomes" id="UP000001556">
    <property type="component" value="Chromosome"/>
</dbReference>
<dbReference type="GO" id="GO:0003677">
    <property type="term" value="F:DNA binding"/>
    <property type="evidence" value="ECO:0007669"/>
    <property type="project" value="UniProtKB-UniRule"/>
</dbReference>
<dbReference type="GO" id="GO:0004252">
    <property type="term" value="F:serine-type endopeptidase activity"/>
    <property type="evidence" value="ECO:0007669"/>
    <property type="project" value="UniProtKB-UniRule"/>
</dbReference>
<dbReference type="GO" id="GO:0006281">
    <property type="term" value="P:DNA repair"/>
    <property type="evidence" value="ECO:0007669"/>
    <property type="project" value="UniProtKB-UniRule"/>
</dbReference>
<dbReference type="GO" id="GO:0006260">
    <property type="term" value="P:DNA replication"/>
    <property type="evidence" value="ECO:0007669"/>
    <property type="project" value="UniProtKB-UniRule"/>
</dbReference>
<dbReference type="GO" id="GO:0045892">
    <property type="term" value="P:negative regulation of DNA-templated transcription"/>
    <property type="evidence" value="ECO:0007669"/>
    <property type="project" value="UniProtKB-UniRule"/>
</dbReference>
<dbReference type="GO" id="GO:0006508">
    <property type="term" value="P:proteolysis"/>
    <property type="evidence" value="ECO:0007669"/>
    <property type="project" value="InterPro"/>
</dbReference>
<dbReference type="GO" id="GO:0009432">
    <property type="term" value="P:SOS response"/>
    <property type="evidence" value="ECO:0007669"/>
    <property type="project" value="UniProtKB-UniRule"/>
</dbReference>
<dbReference type="CDD" id="cd06529">
    <property type="entry name" value="S24_LexA-like"/>
    <property type="match status" value="1"/>
</dbReference>
<dbReference type="FunFam" id="1.10.10.10:FF:000009">
    <property type="entry name" value="LexA repressor"/>
    <property type="match status" value="1"/>
</dbReference>
<dbReference type="FunFam" id="2.10.109.10:FF:000001">
    <property type="entry name" value="LexA repressor"/>
    <property type="match status" value="1"/>
</dbReference>
<dbReference type="Gene3D" id="2.10.109.10">
    <property type="entry name" value="Umud Fragment, subunit A"/>
    <property type="match status" value="1"/>
</dbReference>
<dbReference type="Gene3D" id="1.10.10.10">
    <property type="entry name" value="Winged helix-like DNA-binding domain superfamily/Winged helix DNA-binding domain"/>
    <property type="match status" value="1"/>
</dbReference>
<dbReference type="HAMAP" id="MF_00015">
    <property type="entry name" value="LexA"/>
    <property type="match status" value="1"/>
</dbReference>
<dbReference type="InterPro" id="IPR006200">
    <property type="entry name" value="LexA"/>
</dbReference>
<dbReference type="InterPro" id="IPR039418">
    <property type="entry name" value="LexA-like"/>
</dbReference>
<dbReference type="InterPro" id="IPR036286">
    <property type="entry name" value="LexA/Signal_pep-like_sf"/>
</dbReference>
<dbReference type="InterPro" id="IPR006199">
    <property type="entry name" value="LexA_DNA-bd_dom"/>
</dbReference>
<dbReference type="InterPro" id="IPR050077">
    <property type="entry name" value="LexA_repressor"/>
</dbReference>
<dbReference type="InterPro" id="IPR006197">
    <property type="entry name" value="Peptidase_S24_LexA"/>
</dbReference>
<dbReference type="InterPro" id="IPR015927">
    <property type="entry name" value="Peptidase_S24_S26A/B/C"/>
</dbReference>
<dbReference type="InterPro" id="IPR036388">
    <property type="entry name" value="WH-like_DNA-bd_sf"/>
</dbReference>
<dbReference type="InterPro" id="IPR036390">
    <property type="entry name" value="WH_DNA-bd_sf"/>
</dbReference>
<dbReference type="NCBIfam" id="TIGR00498">
    <property type="entry name" value="lexA"/>
    <property type="match status" value="1"/>
</dbReference>
<dbReference type="PANTHER" id="PTHR33516">
    <property type="entry name" value="LEXA REPRESSOR"/>
    <property type="match status" value="1"/>
</dbReference>
<dbReference type="PANTHER" id="PTHR33516:SF2">
    <property type="entry name" value="LEXA REPRESSOR-RELATED"/>
    <property type="match status" value="1"/>
</dbReference>
<dbReference type="Pfam" id="PF01726">
    <property type="entry name" value="LexA_DNA_bind"/>
    <property type="match status" value="1"/>
</dbReference>
<dbReference type="Pfam" id="PF00717">
    <property type="entry name" value="Peptidase_S24"/>
    <property type="match status" value="1"/>
</dbReference>
<dbReference type="PRINTS" id="PR00726">
    <property type="entry name" value="LEXASERPTASE"/>
</dbReference>
<dbReference type="SUPFAM" id="SSF51306">
    <property type="entry name" value="LexA/Signal peptidase"/>
    <property type="match status" value="1"/>
</dbReference>
<dbReference type="SUPFAM" id="SSF46785">
    <property type="entry name" value="Winged helix' DNA-binding domain"/>
    <property type="match status" value="1"/>
</dbReference>
<protein>
    <recommendedName>
        <fullName evidence="1">LexA repressor</fullName>
        <ecNumber evidence="1">3.4.21.88</ecNumber>
    </recommendedName>
</protein>
<feature type="chain" id="PRO_0000322730" description="LexA repressor">
    <location>
        <begin position="1"/>
        <end position="214"/>
    </location>
</feature>
<feature type="DNA-binding region" description="H-T-H motif" evidence="1">
    <location>
        <begin position="26"/>
        <end position="46"/>
    </location>
</feature>
<feature type="active site" description="For autocatalytic cleavage activity" evidence="1">
    <location>
        <position position="138"/>
    </location>
</feature>
<feature type="active site" description="For autocatalytic cleavage activity" evidence="1">
    <location>
        <position position="175"/>
    </location>
</feature>
<feature type="site" description="Cleavage; by autolysis" evidence="1">
    <location>
        <begin position="103"/>
        <end position="104"/>
    </location>
</feature>